<evidence type="ECO:0000255" key="1">
    <source>
        <dbReference type="HAMAP-Rule" id="MF_00294"/>
    </source>
</evidence>
<evidence type="ECO:0000305" key="2"/>
<gene>
    <name evidence="1" type="primary">rpmG</name>
    <name type="ordered locus">MS53_0124</name>
</gene>
<reference key="1">
    <citation type="journal article" date="2005" name="J. Bacteriol.">
        <title>Swine and poultry pathogens: the complete genome sequences of two strains of Mycoplasma hyopneumoniae and a strain of Mycoplasma synoviae.</title>
        <authorList>
            <person name="Vasconcelos A.T.R."/>
            <person name="Ferreira H.B."/>
            <person name="Bizarro C.V."/>
            <person name="Bonatto S.L."/>
            <person name="Carvalho M.O."/>
            <person name="Pinto P.M."/>
            <person name="Almeida D.F."/>
            <person name="Almeida L.G.P."/>
            <person name="Almeida R."/>
            <person name="Alves-Junior L."/>
            <person name="Assuncao E.N."/>
            <person name="Azevedo V.A.C."/>
            <person name="Bogo M.R."/>
            <person name="Brigido M.M."/>
            <person name="Brocchi M."/>
            <person name="Burity H.A."/>
            <person name="Camargo A.A."/>
            <person name="Camargo S.S."/>
            <person name="Carepo M.S."/>
            <person name="Carraro D.M."/>
            <person name="de Mattos Cascardo J.C."/>
            <person name="Castro L.A."/>
            <person name="Cavalcanti G."/>
            <person name="Chemale G."/>
            <person name="Collevatti R.G."/>
            <person name="Cunha C.W."/>
            <person name="Dallagiovanna B."/>
            <person name="Dambros B.P."/>
            <person name="Dellagostin O.A."/>
            <person name="Falcao C."/>
            <person name="Fantinatti-Garboggini F."/>
            <person name="Felipe M.S.S."/>
            <person name="Fiorentin L."/>
            <person name="Franco G.R."/>
            <person name="Freitas N.S.A."/>
            <person name="Frias D."/>
            <person name="Grangeiro T.B."/>
            <person name="Grisard E.C."/>
            <person name="Guimaraes C.T."/>
            <person name="Hungria M."/>
            <person name="Jardim S.N."/>
            <person name="Krieger M.A."/>
            <person name="Laurino J.P."/>
            <person name="Lima L.F.A."/>
            <person name="Lopes M.I."/>
            <person name="Loreto E.L.S."/>
            <person name="Madeira H.M.F."/>
            <person name="Manfio G.P."/>
            <person name="Maranhao A.Q."/>
            <person name="Martinkovics C.T."/>
            <person name="Medeiros S.R.B."/>
            <person name="Moreira M.A.M."/>
            <person name="Neiva M."/>
            <person name="Ramalho-Neto C.E."/>
            <person name="Nicolas M.F."/>
            <person name="Oliveira S.C."/>
            <person name="Paixao R.F.C."/>
            <person name="Pedrosa F.O."/>
            <person name="Pena S.D.J."/>
            <person name="Pereira M."/>
            <person name="Pereira-Ferrari L."/>
            <person name="Piffer I."/>
            <person name="Pinto L.S."/>
            <person name="Potrich D.P."/>
            <person name="Salim A.C.M."/>
            <person name="Santos F.R."/>
            <person name="Schmitt R."/>
            <person name="Schneider M.P.C."/>
            <person name="Schrank A."/>
            <person name="Schrank I.S."/>
            <person name="Schuck A.F."/>
            <person name="Seuanez H.N."/>
            <person name="Silva D.W."/>
            <person name="Silva R."/>
            <person name="Silva S.C."/>
            <person name="Soares C.M.A."/>
            <person name="Souza K.R.L."/>
            <person name="Souza R.C."/>
            <person name="Staats C.C."/>
            <person name="Steffens M.B.R."/>
            <person name="Teixeira S.M.R."/>
            <person name="Urmenyi T.P."/>
            <person name="Vainstein M.H."/>
            <person name="Zuccherato L.W."/>
            <person name="Simpson A.J.G."/>
            <person name="Zaha A."/>
        </authorList>
    </citation>
    <scope>NUCLEOTIDE SEQUENCE [LARGE SCALE GENOMIC DNA]</scope>
    <source>
        <strain>53</strain>
    </source>
</reference>
<comment type="similarity">
    <text evidence="1">Belongs to the bacterial ribosomal protein bL33 family.</text>
</comment>
<feature type="chain" id="PRO_1000059282" description="Large ribosomal subunit protein bL33">
    <location>
        <begin position="1"/>
        <end position="50"/>
    </location>
</feature>
<proteinExistence type="inferred from homology"/>
<sequence>MAREGFTLECTSCKMQNYISKKNKKLHPEKVKLSKYCSKCSKHSVHKERK</sequence>
<keyword id="KW-1185">Reference proteome</keyword>
<keyword id="KW-0687">Ribonucleoprotein</keyword>
<keyword id="KW-0689">Ribosomal protein</keyword>
<name>RL33_MYCS5</name>
<accession>Q4A6S6</accession>
<dbReference type="EMBL" id="AE017245">
    <property type="protein sequence ID" value="AAZ43545.1"/>
    <property type="molecule type" value="Genomic_DNA"/>
</dbReference>
<dbReference type="RefSeq" id="WP_011283288.1">
    <property type="nucleotide sequence ID" value="NC_007294.1"/>
</dbReference>
<dbReference type="SMR" id="Q4A6S6"/>
<dbReference type="STRING" id="262723.MS53_0124"/>
<dbReference type="KEGG" id="msy:MS53_0124"/>
<dbReference type="eggNOG" id="COG0267">
    <property type="taxonomic scope" value="Bacteria"/>
</dbReference>
<dbReference type="HOGENOM" id="CLU_190949_0_1_14"/>
<dbReference type="OrthoDB" id="9801333at2"/>
<dbReference type="Proteomes" id="UP000000549">
    <property type="component" value="Chromosome"/>
</dbReference>
<dbReference type="GO" id="GO:0005737">
    <property type="term" value="C:cytoplasm"/>
    <property type="evidence" value="ECO:0007669"/>
    <property type="project" value="UniProtKB-ARBA"/>
</dbReference>
<dbReference type="GO" id="GO:1990904">
    <property type="term" value="C:ribonucleoprotein complex"/>
    <property type="evidence" value="ECO:0007669"/>
    <property type="project" value="UniProtKB-KW"/>
</dbReference>
<dbReference type="GO" id="GO:0005840">
    <property type="term" value="C:ribosome"/>
    <property type="evidence" value="ECO:0007669"/>
    <property type="project" value="UniProtKB-KW"/>
</dbReference>
<dbReference type="GO" id="GO:0003735">
    <property type="term" value="F:structural constituent of ribosome"/>
    <property type="evidence" value="ECO:0007669"/>
    <property type="project" value="InterPro"/>
</dbReference>
<dbReference type="GO" id="GO:0006412">
    <property type="term" value="P:translation"/>
    <property type="evidence" value="ECO:0007669"/>
    <property type="project" value="UniProtKB-UniRule"/>
</dbReference>
<dbReference type="Gene3D" id="2.20.28.120">
    <property type="entry name" value="Ribosomal protein L33"/>
    <property type="match status" value="1"/>
</dbReference>
<dbReference type="HAMAP" id="MF_00294">
    <property type="entry name" value="Ribosomal_bL33"/>
    <property type="match status" value="1"/>
</dbReference>
<dbReference type="InterPro" id="IPR001705">
    <property type="entry name" value="Ribosomal_bL33"/>
</dbReference>
<dbReference type="InterPro" id="IPR038584">
    <property type="entry name" value="Ribosomal_bL33_sf"/>
</dbReference>
<dbReference type="InterPro" id="IPR011332">
    <property type="entry name" value="Ribosomal_zn-bd"/>
</dbReference>
<dbReference type="NCBIfam" id="NF001764">
    <property type="entry name" value="PRK00504.1"/>
    <property type="match status" value="1"/>
</dbReference>
<dbReference type="NCBIfam" id="NF001860">
    <property type="entry name" value="PRK00595.1"/>
    <property type="match status" value="1"/>
</dbReference>
<dbReference type="NCBIfam" id="TIGR01023">
    <property type="entry name" value="rpmG_bact"/>
    <property type="match status" value="1"/>
</dbReference>
<dbReference type="PANTHER" id="PTHR43168">
    <property type="entry name" value="50S RIBOSOMAL PROTEIN L33, CHLOROPLASTIC"/>
    <property type="match status" value="1"/>
</dbReference>
<dbReference type="PANTHER" id="PTHR43168:SF2">
    <property type="entry name" value="LARGE RIBOSOMAL SUBUNIT PROTEIN BL33C"/>
    <property type="match status" value="1"/>
</dbReference>
<dbReference type="Pfam" id="PF00471">
    <property type="entry name" value="Ribosomal_L33"/>
    <property type="match status" value="1"/>
</dbReference>
<dbReference type="SUPFAM" id="SSF57829">
    <property type="entry name" value="Zn-binding ribosomal proteins"/>
    <property type="match status" value="1"/>
</dbReference>
<organism>
    <name type="scientific">Mycoplasmopsis synoviae (strain 53)</name>
    <name type="common">Mycoplasma synoviae</name>
    <dbReference type="NCBI Taxonomy" id="262723"/>
    <lineage>
        <taxon>Bacteria</taxon>
        <taxon>Bacillati</taxon>
        <taxon>Mycoplasmatota</taxon>
        <taxon>Mycoplasmoidales</taxon>
        <taxon>Metamycoplasmataceae</taxon>
        <taxon>Mycoplasmopsis</taxon>
    </lineage>
</organism>
<protein>
    <recommendedName>
        <fullName evidence="1">Large ribosomal subunit protein bL33</fullName>
    </recommendedName>
    <alternativeName>
        <fullName evidence="2">50S ribosomal protein L33</fullName>
    </alternativeName>
</protein>